<keyword id="KW-0150">Chloroplast</keyword>
<keyword id="KW-1015">Disulfide bond</keyword>
<keyword id="KW-0249">Electron transport</keyword>
<keyword id="KW-0274">FAD</keyword>
<keyword id="KW-0285">Flavoprotein</keyword>
<keyword id="KW-0472">Membrane</keyword>
<keyword id="KW-0521">NADP</keyword>
<keyword id="KW-0560">Oxidoreductase</keyword>
<keyword id="KW-0597">Phosphoprotein</keyword>
<keyword id="KW-0602">Photosynthesis</keyword>
<keyword id="KW-0934">Plastid</keyword>
<keyword id="KW-1185">Reference proteome</keyword>
<keyword id="KW-0793">Thylakoid</keyword>
<keyword id="KW-0809">Transit peptide</keyword>
<keyword id="KW-0813">Transport</keyword>
<name>FENR1_ORYSJ</name>
<accession>P41344</accession>
<accession>Q0DF89</accession>
<accession>Q7F8E8</accession>
<evidence type="ECO:0000250" key="1"/>
<evidence type="ECO:0000250" key="2">
    <source>
        <dbReference type="UniProtKB" id="P00455"/>
    </source>
</evidence>
<evidence type="ECO:0000250" key="3">
    <source>
        <dbReference type="UniProtKB" id="P10933"/>
    </source>
</evidence>
<evidence type="ECO:0000250" key="4">
    <source>
        <dbReference type="UniProtKB" id="Q9FKW6"/>
    </source>
</evidence>
<evidence type="ECO:0000255" key="5"/>
<evidence type="ECO:0000255" key="6">
    <source>
        <dbReference type="PROSITE-ProRule" id="PRU00716"/>
    </source>
</evidence>
<evidence type="ECO:0000269" key="7">
    <source>
    </source>
</evidence>
<evidence type="ECO:0000303" key="8">
    <source>
    </source>
</evidence>
<evidence type="ECO:0000305" key="9"/>
<evidence type="ECO:0000312" key="10">
    <source>
        <dbReference type="EMBL" id="EAZ35558.1"/>
    </source>
</evidence>
<organism>
    <name type="scientific">Oryza sativa subsp. japonica</name>
    <name type="common">Rice</name>
    <dbReference type="NCBI Taxonomy" id="39947"/>
    <lineage>
        <taxon>Eukaryota</taxon>
        <taxon>Viridiplantae</taxon>
        <taxon>Streptophyta</taxon>
        <taxon>Embryophyta</taxon>
        <taxon>Tracheophyta</taxon>
        <taxon>Spermatophyta</taxon>
        <taxon>Magnoliopsida</taxon>
        <taxon>Liliopsida</taxon>
        <taxon>Poales</taxon>
        <taxon>Poaceae</taxon>
        <taxon>BOP clade</taxon>
        <taxon>Oryzoideae</taxon>
        <taxon>Oryzeae</taxon>
        <taxon>Oryzinae</taxon>
        <taxon>Oryza</taxon>
        <taxon>Oryza sativa</taxon>
    </lineage>
</organism>
<comment type="function">
    <text evidence="4">May play a key role in regulating the relative amounts of cyclic and non-cyclic electron flow to meet the demands of the plant for ATP and reducing power.</text>
</comment>
<comment type="catalytic activity">
    <reaction evidence="4">
        <text>2 reduced [2Fe-2S]-[ferredoxin] + NADP(+) + H(+) = 2 oxidized [2Fe-2S]-[ferredoxin] + NADPH</text>
        <dbReference type="Rhea" id="RHEA:20125"/>
        <dbReference type="Rhea" id="RHEA-COMP:10000"/>
        <dbReference type="Rhea" id="RHEA-COMP:10001"/>
        <dbReference type="ChEBI" id="CHEBI:15378"/>
        <dbReference type="ChEBI" id="CHEBI:33737"/>
        <dbReference type="ChEBI" id="CHEBI:33738"/>
        <dbReference type="ChEBI" id="CHEBI:57783"/>
        <dbReference type="ChEBI" id="CHEBI:58349"/>
        <dbReference type="EC" id="1.18.1.2"/>
    </reaction>
</comment>
<comment type="cofactor">
    <cofactor>
        <name>FAD</name>
        <dbReference type="ChEBI" id="CHEBI:57692"/>
    </cofactor>
</comment>
<comment type="pathway">
    <text evidence="4">Energy metabolism; photosynthesis.</text>
</comment>
<comment type="subunit">
    <text evidence="7">Component of high molecular weight thylakoid LFNRs-containing protein complexes containing LIR1, LFNR1, LFNR2, TIC62 and TROL proteins. Interacts directly with LIR1 and TIC62; LIR1 increases the affinity of LFNR1 and LFNR2 for TIC62.</text>
</comment>
<comment type="subcellular location">
    <subcellularLocation>
        <location evidence="4">Plastid</location>
        <location evidence="4">Chloroplast stroma</location>
    </subcellularLocation>
    <subcellularLocation>
        <location evidence="4">Plastid</location>
        <location evidence="4">Chloroplast thylakoid membrane</location>
        <topology evidence="4">Peripheral membrane protein</topology>
        <orientation evidence="4">Stromal side</orientation>
    </subcellularLocation>
    <text evidence="4">In the vicinity of the photosystem I in the non-stacked and fringe portion of the membrane.</text>
</comment>
<comment type="PTM">
    <text evidence="7">May form interchain disulfide bonds with LIR1.</text>
</comment>
<comment type="similarity">
    <text evidence="9">Belongs to the ferredoxin--NADP reductase type 1 family.</text>
</comment>
<protein>
    <recommendedName>
        <fullName>Ferredoxin--NADP reductase, leaf isozyme 1, chloroplastic</fullName>
        <shortName>FNR</shortName>
        <ecNumber evidence="4">1.18.1.2</ecNumber>
    </recommendedName>
    <alternativeName>
        <fullName evidence="8">Leaf FNR 1</fullName>
        <shortName evidence="8">FNR-1</shortName>
        <shortName evidence="8">Os-LFNR1</shortName>
    </alternativeName>
</protein>
<reference key="1">
    <citation type="journal article" date="1994" name="Plant Physiol.">
        <title>Sequence of a cDNA encoding rice (Oryza sativa L.) leaf ferredoxin-NADP+ reductase.</title>
        <authorList>
            <person name="Aoki H."/>
            <person name="Doyama N."/>
            <person name="Ida S."/>
        </authorList>
    </citation>
    <scope>NUCLEOTIDE SEQUENCE [MRNA]</scope>
    <source>
        <strain>cv. Kinmaze</strain>
        <tissue>Leaf</tissue>
    </source>
</reference>
<reference key="2">
    <citation type="journal article" date="2005" name="Nature">
        <title>The map-based sequence of the rice genome.</title>
        <authorList>
            <consortium name="International rice genome sequencing project (IRGSP)"/>
        </authorList>
    </citation>
    <scope>NUCLEOTIDE SEQUENCE [LARGE SCALE GENOMIC DNA]</scope>
    <source>
        <strain>cv. Nipponbare</strain>
    </source>
</reference>
<reference key="3">
    <citation type="journal article" date="2008" name="Nucleic Acids Res.">
        <title>The rice annotation project database (RAP-DB): 2008 update.</title>
        <authorList>
            <consortium name="The rice annotation project (RAP)"/>
        </authorList>
    </citation>
    <scope>GENOME REANNOTATION</scope>
    <source>
        <strain>cv. Nipponbare</strain>
    </source>
</reference>
<reference key="4">
    <citation type="journal article" date="2013" name="Rice">
        <title>Improvement of the Oryza sativa Nipponbare reference genome using next generation sequence and optical map data.</title>
        <authorList>
            <person name="Kawahara Y."/>
            <person name="de la Bastide M."/>
            <person name="Hamilton J.P."/>
            <person name="Kanamori H."/>
            <person name="McCombie W.R."/>
            <person name="Ouyang S."/>
            <person name="Schwartz D.C."/>
            <person name="Tanaka T."/>
            <person name="Wu J."/>
            <person name="Zhou S."/>
            <person name="Childs K.L."/>
            <person name="Davidson R.M."/>
            <person name="Lin H."/>
            <person name="Quesada-Ocampo L."/>
            <person name="Vaillancourt B."/>
            <person name="Sakai H."/>
            <person name="Lee S.S."/>
            <person name="Kim J."/>
            <person name="Numa H."/>
            <person name="Itoh T."/>
            <person name="Buell C.R."/>
            <person name="Matsumoto T."/>
        </authorList>
    </citation>
    <scope>GENOME REANNOTATION</scope>
    <source>
        <strain>cv. Nipponbare</strain>
    </source>
</reference>
<reference key="5">
    <citation type="journal article" date="2005" name="PLoS Biol.">
        <title>The genomes of Oryza sativa: a history of duplications.</title>
        <authorList>
            <person name="Yu J."/>
            <person name="Wang J."/>
            <person name="Lin W."/>
            <person name="Li S."/>
            <person name="Li H."/>
            <person name="Zhou J."/>
            <person name="Ni P."/>
            <person name="Dong W."/>
            <person name="Hu S."/>
            <person name="Zeng C."/>
            <person name="Zhang J."/>
            <person name="Zhang Y."/>
            <person name="Li R."/>
            <person name="Xu Z."/>
            <person name="Li S."/>
            <person name="Li X."/>
            <person name="Zheng H."/>
            <person name="Cong L."/>
            <person name="Lin L."/>
            <person name="Yin J."/>
            <person name="Geng J."/>
            <person name="Li G."/>
            <person name="Shi J."/>
            <person name="Liu J."/>
            <person name="Lv H."/>
            <person name="Li J."/>
            <person name="Wang J."/>
            <person name="Deng Y."/>
            <person name="Ran L."/>
            <person name="Shi X."/>
            <person name="Wang X."/>
            <person name="Wu Q."/>
            <person name="Li C."/>
            <person name="Ren X."/>
            <person name="Wang J."/>
            <person name="Wang X."/>
            <person name="Li D."/>
            <person name="Liu D."/>
            <person name="Zhang X."/>
            <person name="Ji Z."/>
            <person name="Zhao W."/>
            <person name="Sun Y."/>
            <person name="Zhang Z."/>
            <person name="Bao J."/>
            <person name="Han Y."/>
            <person name="Dong L."/>
            <person name="Ji J."/>
            <person name="Chen P."/>
            <person name="Wu S."/>
            <person name="Liu J."/>
            <person name="Xiao Y."/>
            <person name="Bu D."/>
            <person name="Tan J."/>
            <person name="Yang L."/>
            <person name="Ye C."/>
            <person name="Zhang J."/>
            <person name="Xu J."/>
            <person name="Zhou Y."/>
            <person name="Yu Y."/>
            <person name="Zhang B."/>
            <person name="Zhuang S."/>
            <person name="Wei H."/>
            <person name="Liu B."/>
            <person name="Lei M."/>
            <person name="Yu H."/>
            <person name="Li Y."/>
            <person name="Xu H."/>
            <person name="Wei S."/>
            <person name="He X."/>
            <person name="Fang L."/>
            <person name="Zhang Z."/>
            <person name="Zhang Y."/>
            <person name="Huang X."/>
            <person name="Su Z."/>
            <person name="Tong W."/>
            <person name="Li J."/>
            <person name="Tong Z."/>
            <person name="Li S."/>
            <person name="Ye J."/>
            <person name="Wang L."/>
            <person name="Fang L."/>
            <person name="Lei T."/>
            <person name="Chen C.-S."/>
            <person name="Chen H.-C."/>
            <person name="Xu Z."/>
            <person name="Li H."/>
            <person name="Huang H."/>
            <person name="Zhang F."/>
            <person name="Xu H."/>
            <person name="Li N."/>
            <person name="Zhao C."/>
            <person name="Li S."/>
            <person name="Dong L."/>
            <person name="Huang Y."/>
            <person name="Li L."/>
            <person name="Xi Y."/>
            <person name="Qi Q."/>
            <person name="Li W."/>
            <person name="Zhang B."/>
            <person name="Hu W."/>
            <person name="Zhang Y."/>
            <person name="Tian X."/>
            <person name="Jiao Y."/>
            <person name="Liang X."/>
            <person name="Jin J."/>
            <person name="Gao L."/>
            <person name="Zheng W."/>
            <person name="Hao B."/>
            <person name="Liu S.-M."/>
            <person name="Wang W."/>
            <person name="Yuan L."/>
            <person name="Cao M."/>
            <person name="McDermott J."/>
            <person name="Samudrala R."/>
            <person name="Wang J."/>
            <person name="Wong G.K.-S."/>
            <person name="Yang H."/>
        </authorList>
    </citation>
    <scope>NUCLEOTIDE SEQUENCE [LARGE SCALE GENOMIC DNA]</scope>
    <source>
        <strain>cv. Nipponbare</strain>
    </source>
</reference>
<reference key="6">
    <citation type="journal article" date="2003" name="Science">
        <title>Collection, mapping, and annotation of over 28,000 cDNA clones from japonica rice.</title>
        <authorList>
            <consortium name="The rice full-length cDNA consortium"/>
        </authorList>
    </citation>
    <scope>NUCLEOTIDE SEQUENCE [LARGE SCALE MRNA]</scope>
    <source>
        <strain>cv. Nipponbare</strain>
    </source>
</reference>
<reference key="7">
    <citation type="journal article" date="2016" name="Plant Cell">
        <title>LIGHT-INDUCED RICE1 regulates light-dependent attachment of LEAF-TYPE FERREDOXIN-NADP+ OXIDOREDUCTASE to the thylakoid membrane in rice and Arabidopsis.</title>
        <authorList>
            <person name="Yang C."/>
            <person name="Hu H."/>
            <person name="Ren H."/>
            <person name="Kong Y."/>
            <person name="Lin H."/>
            <person name="Guo J."/>
            <person name="Wang L."/>
            <person name="He Y."/>
            <person name="Ding X."/>
            <person name="Grabsztunowicz M."/>
            <person name="Mulo P."/>
            <person name="Chen T."/>
            <person name="Liu Y."/>
            <person name="Wu Z."/>
            <person name="Wu Y."/>
            <person name="Mao C."/>
            <person name="Wu P."/>
            <person name="Mo X."/>
        </authorList>
    </citation>
    <scope>INTERACTION WITH LIR1 AND TIC62</scope>
    <scope>DISULFIDE BOND</scope>
    <source>
        <strain>cv. Nipponbare</strain>
    </source>
</reference>
<gene>
    <name evidence="8" type="primary">LFNR1</name>
    <name evidence="9" type="ordered locus">Os06g0107700</name>
    <name evidence="9" type="ordered locus">LOC_Os06g01850</name>
    <name evidence="10" type="ORF">OsJ_19844</name>
    <name type="ORF">P0514G12.8</name>
    <name type="ORF">P0644B06.52</name>
</gene>
<feature type="transit peptide" description="Chloroplast" evidence="5">
    <location>
        <begin position="1"/>
        <end position="62"/>
    </location>
</feature>
<feature type="chain" id="PRO_0000019409" description="Ferredoxin--NADP reductase, leaf isozyme 1, chloroplastic">
    <location>
        <begin position="63"/>
        <end position="362"/>
    </location>
</feature>
<feature type="domain" description="FAD-binding FR-type" evidence="6">
    <location>
        <begin position="83"/>
        <end position="205"/>
    </location>
</feature>
<feature type="binding site" evidence="3">
    <location>
        <begin position="141"/>
        <end position="144"/>
    </location>
    <ligand>
        <name>FAD</name>
        <dbReference type="ChEBI" id="CHEBI:57692"/>
    </ligand>
</feature>
<feature type="binding site" evidence="3">
    <location>
        <position position="144"/>
    </location>
    <ligand>
        <name>NADP(+)</name>
        <dbReference type="ChEBI" id="CHEBI:58349"/>
    </ligand>
</feature>
<feature type="binding site" evidence="3">
    <location>
        <begin position="162"/>
        <end position="164"/>
    </location>
    <ligand>
        <name>FAD</name>
        <dbReference type="ChEBI" id="CHEBI:57692"/>
    </ligand>
</feature>
<feature type="binding site" evidence="3">
    <location>
        <position position="164"/>
    </location>
    <ligand>
        <name>NADP(+)</name>
        <dbReference type="ChEBI" id="CHEBI:58349"/>
    </ligand>
</feature>
<feature type="binding site" evidence="3">
    <location>
        <position position="168"/>
    </location>
    <ligand>
        <name>FAD</name>
        <dbReference type="ChEBI" id="CHEBI:57692"/>
    </ligand>
</feature>
<feature type="binding site" evidence="3">
    <location>
        <begin position="179"/>
        <end position="181"/>
    </location>
    <ligand>
        <name>FAD</name>
        <dbReference type="ChEBI" id="CHEBI:57692"/>
    </ligand>
</feature>
<feature type="binding site" evidence="2">
    <location>
        <position position="220"/>
    </location>
    <ligand>
        <name>FAD</name>
        <dbReference type="ChEBI" id="CHEBI:57692"/>
    </ligand>
</feature>
<feature type="binding site" evidence="3">
    <location>
        <position position="220"/>
    </location>
    <ligand>
        <name>NADP(+)</name>
        <dbReference type="ChEBI" id="CHEBI:58349"/>
    </ligand>
</feature>
<feature type="binding site" evidence="3">
    <location>
        <begin position="252"/>
        <end position="253"/>
    </location>
    <ligand>
        <name>NADP(+)</name>
        <dbReference type="ChEBI" id="CHEBI:58349"/>
    </ligand>
</feature>
<feature type="binding site" evidence="3">
    <location>
        <begin position="282"/>
        <end position="283"/>
    </location>
    <ligand>
        <name>NADP(+)</name>
        <dbReference type="ChEBI" id="CHEBI:58349"/>
    </ligand>
</feature>
<feature type="binding site" evidence="3">
    <location>
        <position position="292"/>
    </location>
    <ligand>
        <name>NADP(+)</name>
        <dbReference type="ChEBI" id="CHEBI:58349"/>
    </ligand>
</feature>
<feature type="binding site" evidence="3">
    <location>
        <begin position="321"/>
        <end position="322"/>
    </location>
    <ligand>
        <name>NADP(+)</name>
        <dbReference type="ChEBI" id="CHEBI:58349"/>
    </ligand>
</feature>
<feature type="binding site" evidence="3">
    <location>
        <position position="360"/>
    </location>
    <ligand>
        <name>NADP(+)</name>
        <dbReference type="ChEBI" id="CHEBI:58349"/>
    </ligand>
</feature>
<feature type="modified residue" description="Phosphoserine" evidence="4">
    <location>
        <position position="181"/>
    </location>
</feature>
<feature type="disulfide bond" evidence="1">
    <location>
        <begin position="180"/>
        <end position="185"/>
    </location>
</feature>
<dbReference type="EC" id="1.18.1.2" evidence="4"/>
<dbReference type="EMBL" id="D17790">
    <property type="protein sequence ID" value="BAA04616.1"/>
    <property type="molecule type" value="mRNA"/>
</dbReference>
<dbReference type="EMBL" id="AP000616">
    <property type="protein sequence ID" value="BAA85425.1"/>
    <property type="molecule type" value="Genomic_DNA"/>
</dbReference>
<dbReference type="EMBL" id="AP001129">
    <property type="protein sequence ID" value="BAA90642.1"/>
    <property type="molecule type" value="Genomic_DNA"/>
</dbReference>
<dbReference type="EMBL" id="AP008212">
    <property type="protein sequence ID" value="BAF18484.1"/>
    <property type="molecule type" value="Genomic_DNA"/>
</dbReference>
<dbReference type="EMBL" id="AP014962">
    <property type="protein sequence ID" value="BAS95764.1"/>
    <property type="molecule type" value="Genomic_DNA"/>
</dbReference>
<dbReference type="EMBL" id="CM000143">
    <property type="protein sequence ID" value="EAZ35558.1"/>
    <property type="molecule type" value="Genomic_DNA"/>
</dbReference>
<dbReference type="EMBL" id="AK065063">
    <property type="protein sequence ID" value="BAG89346.1"/>
    <property type="molecule type" value="mRNA"/>
</dbReference>
<dbReference type="PIR" id="T04349">
    <property type="entry name" value="T04349"/>
</dbReference>
<dbReference type="RefSeq" id="NP_001389608.1">
    <property type="nucleotide sequence ID" value="NM_001402679.1"/>
</dbReference>
<dbReference type="RefSeq" id="XP_015640980.1">
    <property type="nucleotide sequence ID" value="XM_015785494.1"/>
</dbReference>
<dbReference type="SMR" id="P41344"/>
<dbReference type="FunCoup" id="P41344">
    <property type="interactions" value="724"/>
</dbReference>
<dbReference type="STRING" id="39947.P41344"/>
<dbReference type="PaxDb" id="39947-P41344"/>
<dbReference type="EnsemblPlants" id="Os06t0107700-01">
    <property type="protein sequence ID" value="Os06t0107700-01"/>
    <property type="gene ID" value="Os06g0107700"/>
</dbReference>
<dbReference type="GeneID" id="4339874"/>
<dbReference type="Gramene" id="Os06t0107700-01">
    <property type="protein sequence ID" value="Os06t0107700-01"/>
    <property type="gene ID" value="Os06g0107700"/>
</dbReference>
<dbReference type="KEGG" id="dosa:Os06g0107700"/>
<dbReference type="eggNOG" id="KOG1158">
    <property type="taxonomic scope" value="Eukaryota"/>
</dbReference>
<dbReference type="HOGENOM" id="CLU_053066_0_0_1"/>
<dbReference type="InParanoid" id="P41344"/>
<dbReference type="OMA" id="GKAWLFM"/>
<dbReference type="OrthoDB" id="1688044at2759"/>
<dbReference type="BRENDA" id="1.18.1.2">
    <property type="organism ID" value="8948"/>
</dbReference>
<dbReference type="UniPathway" id="UPA00091"/>
<dbReference type="Proteomes" id="UP000000763">
    <property type="component" value="Chromosome 6"/>
</dbReference>
<dbReference type="Proteomes" id="UP000007752">
    <property type="component" value="Chromosome 6"/>
</dbReference>
<dbReference type="Proteomes" id="UP000059680">
    <property type="component" value="Chromosome 6"/>
</dbReference>
<dbReference type="GO" id="GO:0009570">
    <property type="term" value="C:chloroplast stroma"/>
    <property type="evidence" value="ECO:0007669"/>
    <property type="project" value="UniProtKB-SubCell"/>
</dbReference>
<dbReference type="GO" id="GO:0098807">
    <property type="term" value="C:chloroplast thylakoid membrane protein complex"/>
    <property type="evidence" value="ECO:0000314"/>
    <property type="project" value="UniProtKB"/>
</dbReference>
<dbReference type="GO" id="GO:0009055">
    <property type="term" value="F:electron transfer activity"/>
    <property type="evidence" value="ECO:0000318"/>
    <property type="project" value="GO_Central"/>
</dbReference>
<dbReference type="GO" id="GO:0004324">
    <property type="term" value="F:ferredoxin-NADP+ reductase activity"/>
    <property type="evidence" value="ECO:0007669"/>
    <property type="project" value="UniProtKB-EC"/>
</dbReference>
<dbReference type="GO" id="GO:0022900">
    <property type="term" value="P:electron transport chain"/>
    <property type="evidence" value="ECO:0000318"/>
    <property type="project" value="GO_Central"/>
</dbReference>
<dbReference type="GO" id="GO:0015979">
    <property type="term" value="P:photosynthesis"/>
    <property type="evidence" value="ECO:0007669"/>
    <property type="project" value="UniProtKB-UniPathway"/>
</dbReference>
<dbReference type="CDD" id="cd06208">
    <property type="entry name" value="CYPOR_like_FNR"/>
    <property type="match status" value="1"/>
</dbReference>
<dbReference type="FunFam" id="2.40.30.10:FF:000048">
    <property type="entry name" value="Ferredoxin--NADP reductase, chloroplastic"/>
    <property type="match status" value="1"/>
</dbReference>
<dbReference type="FunFam" id="3.40.50.80:FF:000008">
    <property type="entry name" value="Ferredoxin--NADP reductase, chloroplastic"/>
    <property type="match status" value="1"/>
</dbReference>
<dbReference type="Gene3D" id="3.40.50.80">
    <property type="entry name" value="Nucleotide-binding domain of ferredoxin-NADP reductase (FNR) module"/>
    <property type="match status" value="1"/>
</dbReference>
<dbReference type="Gene3D" id="2.40.30.10">
    <property type="entry name" value="Translation factors"/>
    <property type="match status" value="1"/>
</dbReference>
<dbReference type="InterPro" id="IPR017927">
    <property type="entry name" value="FAD-bd_FR_type"/>
</dbReference>
<dbReference type="InterPro" id="IPR001709">
    <property type="entry name" value="Flavoprot_Pyr_Nucl_cyt_Rdtase"/>
</dbReference>
<dbReference type="InterPro" id="IPR015701">
    <property type="entry name" value="FNR"/>
</dbReference>
<dbReference type="InterPro" id="IPR039261">
    <property type="entry name" value="FNR_nucleotide-bd"/>
</dbReference>
<dbReference type="InterPro" id="IPR035442">
    <property type="entry name" value="FNR_plant_Cyanobacteria"/>
</dbReference>
<dbReference type="InterPro" id="IPR001433">
    <property type="entry name" value="OxRdtase_FAD/NAD-bd"/>
</dbReference>
<dbReference type="InterPro" id="IPR017938">
    <property type="entry name" value="Riboflavin_synthase-like_b-brl"/>
</dbReference>
<dbReference type="PANTHER" id="PTHR43314">
    <property type="match status" value="1"/>
</dbReference>
<dbReference type="Pfam" id="PF00175">
    <property type="entry name" value="NAD_binding_1"/>
    <property type="match status" value="1"/>
</dbReference>
<dbReference type="PIRSF" id="PIRSF501178">
    <property type="entry name" value="FNR-PetH"/>
    <property type="match status" value="1"/>
</dbReference>
<dbReference type="PIRSF" id="PIRSF000361">
    <property type="entry name" value="Frd-NADP+_RD"/>
    <property type="match status" value="1"/>
</dbReference>
<dbReference type="PRINTS" id="PR00371">
    <property type="entry name" value="FPNCR"/>
</dbReference>
<dbReference type="SUPFAM" id="SSF52343">
    <property type="entry name" value="Ferredoxin reductase-like, C-terminal NADP-linked domain"/>
    <property type="match status" value="1"/>
</dbReference>
<dbReference type="SUPFAM" id="SSF63380">
    <property type="entry name" value="Riboflavin synthase domain-like"/>
    <property type="match status" value="1"/>
</dbReference>
<dbReference type="PROSITE" id="PS51384">
    <property type="entry name" value="FAD_FR"/>
    <property type="match status" value="1"/>
</dbReference>
<sequence length="362" mass="40008">MAAVTAAAVSTSAAAAVTKASPSPAHCFLPCPPRTRAAHQRGLLLRAQVSTTDAAAVAAAPAKKEKISKKHDEGVVTNKYRPKEPYVGKCLLNTKITADDAPGETWHMVFSTEGEIPYREGQSIGVIADGVDKNGKPHKLRLYSIASSALGDFGDSKTVSLCVKRLVYTNDQGEIVKGVCSNFLCDLKPGSDVKITGPVGKEMLMPKDPNANIIMLATGTGIAPFRSFLWKMFFEKYDDYKFNGLAWLFLGVPTSSSLLYKEEFDKMKAKAPENFRVDYAVSREQTNAQGEKMYIQTRMAEYKEELWELLKKDHTYVYMCGLKGMEKGIDDIMVSLAAKDGIDWADYKKQLKKGEQWNVEVY</sequence>
<proteinExistence type="evidence at protein level"/>